<proteinExistence type="inferred from homology"/>
<feature type="chain" id="PRO_0000158857" description="Adenylate kinase">
    <location>
        <begin position="1"/>
        <end position="36" status="greater than"/>
    </location>
</feature>
<feature type="region of interest" description="NMP" evidence="1">
    <location>
        <begin position="30"/>
        <end position="36" status="greater than"/>
    </location>
</feature>
<feature type="binding site" evidence="1">
    <location>
        <begin position="10"/>
        <end position="15"/>
    </location>
    <ligand>
        <name>ATP</name>
        <dbReference type="ChEBI" id="CHEBI:30616"/>
    </ligand>
</feature>
<feature type="binding site" evidence="1">
    <location>
        <position position="31"/>
    </location>
    <ligand>
        <name>AMP</name>
        <dbReference type="ChEBI" id="CHEBI:456215"/>
    </ligand>
</feature>
<feature type="binding site" evidence="1">
    <location>
        <position position="36"/>
    </location>
    <ligand>
        <name>AMP</name>
        <dbReference type="ChEBI" id="CHEBI:456215"/>
    </ligand>
</feature>
<feature type="non-terminal residue">
    <location>
        <position position="36"/>
    </location>
</feature>
<gene>
    <name type="primary">adk</name>
</gene>
<reference key="1">
    <citation type="journal article" date="1999" name="Biochim. Biophys. Acta">
        <title>Analysis and regulation of the secY gene from Streptomyces griseus N2-3-11 and interaction of the SecY protein with the SecA protein.</title>
        <authorList>
            <person name="Poehling S."/>
            <person name="Piepersberg W."/>
            <person name="Wehmeier U.F."/>
        </authorList>
    </citation>
    <scope>NUCLEOTIDE SEQUENCE [GENOMIC DNA]</scope>
    <source>
        <strain>N2-3-11</strain>
    </source>
</reference>
<organism>
    <name type="scientific">Streptomyces griseus</name>
    <dbReference type="NCBI Taxonomy" id="1911"/>
    <lineage>
        <taxon>Bacteria</taxon>
        <taxon>Bacillati</taxon>
        <taxon>Actinomycetota</taxon>
        <taxon>Actinomycetes</taxon>
        <taxon>Kitasatosporales</taxon>
        <taxon>Streptomycetaceae</taxon>
        <taxon>Streptomyces</taxon>
    </lineage>
</organism>
<keyword id="KW-0067">ATP-binding</keyword>
<keyword id="KW-0963">Cytoplasm</keyword>
<keyword id="KW-0418">Kinase</keyword>
<keyword id="KW-0545">Nucleotide biosynthesis</keyword>
<keyword id="KW-0547">Nucleotide-binding</keyword>
<keyword id="KW-0808">Transferase</keyword>
<evidence type="ECO:0000250" key="1">
    <source>
        <dbReference type="UniProtKB" id="P69441"/>
    </source>
</evidence>
<evidence type="ECO:0000305" key="2"/>
<sequence>MRIVLVGPPGAGKGTQAAYLAQNLSIPHIATGDLFR</sequence>
<protein>
    <recommendedName>
        <fullName>Adenylate kinase</fullName>
        <shortName>AK</shortName>
        <ecNumber>2.7.4.3</ecNumber>
    </recommendedName>
    <alternativeName>
        <fullName>ATP-AMP transphosphorylase</fullName>
    </alternativeName>
    <alternativeName>
        <fullName>ATP:AMP phosphotransferase</fullName>
    </alternativeName>
    <alternativeName>
        <fullName>Adenylate monophosphate kinase</fullName>
    </alternativeName>
</protein>
<accession>P53398</accession>
<name>KAD_STRGR</name>
<dbReference type="EC" id="2.7.4.3"/>
<dbReference type="EMBL" id="X95915">
    <property type="protein sequence ID" value="CAA65162.1"/>
    <property type="molecule type" value="Genomic_DNA"/>
</dbReference>
<dbReference type="SMR" id="P53398"/>
<dbReference type="STRING" id="1911.GCA_001715295_02272"/>
<dbReference type="UniPathway" id="UPA00588">
    <property type="reaction ID" value="UER00649"/>
</dbReference>
<dbReference type="GO" id="GO:0005737">
    <property type="term" value="C:cytoplasm"/>
    <property type="evidence" value="ECO:0007669"/>
    <property type="project" value="UniProtKB-SubCell"/>
</dbReference>
<dbReference type="GO" id="GO:0004017">
    <property type="term" value="F:adenylate kinase activity"/>
    <property type="evidence" value="ECO:0007669"/>
    <property type="project" value="UniProtKB-EC"/>
</dbReference>
<dbReference type="GO" id="GO:0005524">
    <property type="term" value="F:ATP binding"/>
    <property type="evidence" value="ECO:0007669"/>
    <property type="project" value="UniProtKB-KW"/>
</dbReference>
<dbReference type="GO" id="GO:0044209">
    <property type="term" value="P:AMP salvage"/>
    <property type="evidence" value="ECO:0007669"/>
    <property type="project" value="UniProtKB-UniPathway"/>
</dbReference>
<dbReference type="Gene3D" id="3.40.50.300">
    <property type="entry name" value="P-loop containing nucleotide triphosphate hydrolases"/>
    <property type="match status" value="1"/>
</dbReference>
<dbReference type="InterPro" id="IPR000850">
    <property type="entry name" value="Adenylat/UMP-CMP_kin"/>
</dbReference>
<dbReference type="InterPro" id="IPR027417">
    <property type="entry name" value="P-loop_NTPase"/>
</dbReference>
<dbReference type="Pfam" id="PF00406">
    <property type="entry name" value="ADK"/>
    <property type="match status" value="1"/>
</dbReference>
<dbReference type="PRINTS" id="PR00094">
    <property type="entry name" value="ADENYLTKNASE"/>
</dbReference>
<dbReference type="SUPFAM" id="SSF52540">
    <property type="entry name" value="P-loop containing nucleoside triphosphate hydrolases"/>
    <property type="match status" value="1"/>
</dbReference>
<comment type="function">
    <text evidence="1">Catalyzes the reversible transfer of the terminal phosphate group between ATP and AMP. Plays an important role in cellular energy homeostasis and in adenine nucleotide metabolism.</text>
</comment>
<comment type="catalytic activity">
    <reaction evidence="1">
        <text>AMP + ATP = 2 ADP</text>
        <dbReference type="Rhea" id="RHEA:12973"/>
        <dbReference type="ChEBI" id="CHEBI:30616"/>
        <dbReference type="ChEBI" id="CHEBI:456215"/>
        <dbReference type="ChEBI" id="CHEBI:456216"/>
        <dbReference type="EC" id="2.7.4.3"/>
    </reaction>
</comment>
<comment type="pathway">
    <text evidence="1">Purine metabolism; AMP biosynthesis via salvage pathway; AMP from ADP: step 1/1.</text>
</comment>
<comment type="subunit">
    <text evidence="1">Monomer.</text>
</comment>
<comment type="subcellular location">
    <subcellularLocation>
        <location evidence="1">Cytoplasm</location>
    </subcellularLocation>
</comment>
<comment type="domain">
    <text evidence="1">Consists of three domains, a large central CORE domain and two small peripheral domains, NMPbind and LID, which undergo movements during catalysis. The LID domain closes over the site of phosphoryl transfer upon ATP binding. Assembling and dissambling the active center during each catalytic cycle provides an effective means to prevent ATP hydrolysis.</text>
</comment>
<comment type="similarity">
    <text evidence="2">Belongs to the adenylate kinase family.</text>
</comment>